<protein>
    <recommendedName>
        <fullName evidence="1">Proteasome subunit beta 1</fullName>
        <ecNumber evidence="1">3.4.25.1</ecNumber>
    </recommendedName>
    <alternativeName>
        <fullName evidence="1">20S proteasome beta subunit 1</fullName>
    </alternativeName>
    <alternativeName>
        <fullName evidence="1">Proteasome core protein PsmB 1</fullName>
    </alternativeName>
</protein>
<dbReference type="EC" id="3.4.25.1" evidence="1"/>
<dbReference type="EMBL" id="CP001404">
    <property type="protein sequence ID" value="ACP48090.1"/>
    <property type="molecule type" value="Genomic_DNA"/>
</dbReference>
<dbReference type="SMR" id="C3NFX2"/>
<dbReference type="KEGG" id="sin:YN1551_0982"/>
<dbReference type="HOGENOM" id="CLU_035750_7_2_2"/>
<dbReference type="Proteomes" id="UP000006818">
    <property type="component" value="Chromosome"/>
</dbReference>
<dbReference type="GO" id="GO:0005737">
    <property type="term" value="C:cytoplasm"/>
    <property type="evidence" value="ECO:0007669"/>
    <property type="project" value="UniProtKB-SubCell"/>
</dbReference>
<dbReference type="GO" id="GO:0019774">
    <property type="term" value="C:proteasome core complex, beta-subunit complex"/>
    <property type="evidence" value="ECO:0007669"/>
    <property type="project" value="UniProtKB-UniRule"/>
</dbReference>
<dbReference type="GO" id="GO:0004298">
    <property type="term" value="F:threonine-type endopeptidase activity"/>
    <property type="evidence" value="ECO:0007669"/>
    <property type="project" value="UniProtKB-UniRule"/>
</dbReference>
<dbReference type="GO" id="GO:0010498">
    <property type="term" value="P:proteasomal protein catabolic process"/>
    <property type="evidence" value="ECO:0007669"/>
    <property type="project" value="UniProtKB-UniRule"/>
</dbReference>
<dbReference type="FunFam" id="3.60.20.10:FF:000079">
    <property type="entry name" value="Proteasome subunit beta 2"/>
    <property type="match status" value="1"/>
</dbReference>
<dbReference type="Gene3D" id="3.60.20.10">
    <property type="entry name" value="Glutamine Phosphoribosylpyrophosphate, subunit 1, domain 1"/>
    <property type="match status" value="1"/>
</dbReference>
<dbReference type="HAMAP" id="MF_02113_A">
    <property type="entry name" value="Proteasome_B_A"/>
    <property type="match status" value="1"/>
</dbReference>
<dbReference type="InterPro" id="IPR029055">
    <property type="entry name" value="Ntn_hydrolases_N"/>
</dbReference>
<dbReference type="InterPro" id="IPR019983">
    <property type="entry name" value="Pept_T1A_Psome_bsu_arc"/>
</dbReference>
<dbReference type="InterPro" id="IPR000243">
    <property type="entry name" value="Pept_T1A_subB"/>
</dbReference>
<dbReference type="InterPro" id="IPR016050">
    <property type="entry name" value="Proteasome_bsu_CS"/>
</dbReference>
<dbReference type="InterPro" id="IPR001353">
    <property type="entry name" value="Proteasome_sua/b"/>
</dbReference>
<dbReference type="InterPro" id="IPR023333">
    <property type="entry name" value="Proteasome_suB-type"/>
</dbReference>
<dbReference type="NCBIfam" id="TIGR03634">
    <property type="entry name" value="arc_protsome_B"/>
    <property type="match status" value="1"/>
</dbReference>
<dbReference type="PANTHER" id="PTHR32194:SF0">
    <property type="entry name" value="ATP-DEPENDENT PROTEASE SUBUNIT HSLV"/>
    <property type="match status" value="1"/>
</dbReference>
<dbReference type="PANTHER" id="PTHR32194">
    <property type="entry name" value="METALLOPROTEASE TLDD"/>
    <property type="match status" value="1"/>
</dbReference>
<dbReference type="Pfam" id="PF00227">
    <property type="entry name" value="Proteasome"/>
    <property type="match status" value="1"/>
</dbReference>
<dbReference type="PRINTS" id="PR00141">
    <property type="entry name" value="PROTEASOME"/>
</dbReference>
<dbReference type="SUPFAM" id="SSF56235">
    <property type="entry name" value="N-terminal nucleophile aminohydrolases (Ntn hydrolases)"/>
    <property type="match status" value="1"/>
</dbReference>
<dbReference type="PROSITE" id="PS00854">
    <property type="entry name" value="PROTEASOME_BETA_1"/>
    <property type="match status" value="1"/>
</dbReference>
<dbReference type="PROSITE" id="PS51476">
    <property type="entry name" value="PROTEASOME_BETA_2"/>
    <property type="match status" value="1"/>
</dbReference>
<name>PSB1_SACI1</name>
<feature type="propeptide" id="PRO_0000397450" description="Removed in mature form; by autocatalysis" evidence="1">
    <location>
        <begin position="1"/>
        <end position="6"/>
    </location>
</feature>
<feature type="chain" id="PRO_0000397451" description="Proteasome subunit beta 1">
    <location>
        <begin position="7"/>
        <end position="196"/>
    </location>
</feature>
<feature type="active site" description="Nucleophile" evidence="1">
    <location>
        <position position="7"/>
    </location>
</feature>
<keyword id="KW-0068">Autocatalytic cleavage</keyword>
<keyword id="KW-0963">Cytoplasm</keyword>
<keyword id="KW-0378">Hydrolase</keyword>
<keyword id="KW-0645">Protease</keyword>
<keyword id="KW-0647">Proteasome</keyword>
<keyword id="KW-0888">Threonine protease</keyword>
<keyword id="KW-0865">Zymogen</keyword>
<organism>
    <name type="scientific">Saccharolobus islandicus (strain Y.N.15.51 / Yellowstone #2)</name>
    <name type="common">Sulfolobus islandicus</name>
    <dbReference type="NCBI Taxonomy" id="419942"/>
    <lineage>
        <taxon>Archaea</taxon>
        <taxon>Thermoproteota</taxon>
        <taxon>Thermoprotei</taxon>
        <taxon>Sulfolobales</taxon>
        <taxon>Sulfolobaceae</taxon>
        <taxon>Saccharolobus</taxon>
    </lineage>
</organism>
<comment type="function">
    <text evidence="1">Component of the proteasome core, a large protease complex with broad specificity involved in protein degradation.</text>
</comment>
<comment type="catalytic activity">
    <reaction evidence="1">
        <text>Cleavage of peptide bonds with very broad specificity.</text>
        <dbReference type="EC" id="3.4.25.1"/>
    </reaction>
</comment>
<comment type="activity regulation">
    <text evidence="1">The formation of the proteasomal ATPase PAN-20S proteasome complex, via the docking of the C-termini of PAN into the intersubunit pockets in the alpha-rings, triggers opening of the gate for substrate entry. Interconversion between the open-gate and close-gate conformations leads to a dynamic regulation of the 20S proteasome proteolysis activity.</text>
</comment>
<comment type="subunit">
    <text evidence="1">The 20S proteasome core is composed of 14 alpha and 14 beta subunits that assemble into four stacked heptameric rings, resulting in a barrel-shaped structure. The two inner rings, each composed of seven catalytic beta subunits, are sandwiched by two outer rings, each composed of seven alpha subunits. The catalytic chamber with the active sites is on the inside of the barrel. Has a gated structure, the ends of the cylinder being occluded by the N-termini of the alpha-subunits. Is capped at one or both ends by the proteasome regulatory ATPase, PAN.</text>
</comment>
<comment type="subcellular location">
    <subcellularLocation>
        <location evidence="1">Cytoplasm</location>
    </subcellularLocation>
</comment>
<comment type="similarity">
    <text evidence="1">Belongs to the peptidase T1B family.</text>
</comment>
<accession>C3NFX2</accession>
<evidence type="ECO:0000255" key="1">
    <source>
        <dbReference type="HAMAP-Rule" id="MF_02113"/>
    </source>
</evidence>
<gene>
    <name evidence="1" type="primary">psmB1</name>
    <name type="ordered locus">YN1551_0982</name>
</gene>
<reference key="1">
    <citation type="journal article" date="2009" name="Proc. Natl. Acad. Sci. U.S.A.">
        <title>Biogeography of the Sulfolobus islandicus pan-genome.</title>
        <authorList>
            <person name="Reno M.L."/>
            <person name="Held N.L."/>
            <person name="Fields C.J."/>
            <person name="Burke P.V."/>
            <person name="Whitaker R.J."/>
        </authorList>
    </citation>
    <scope>NUCLEOTIDE SEQUENCE [LARGE SCALE GENOMIC DNA]</scope>
    <source>
        <strain>Y.N.15.51 / Yellowstone #2</strain>
    </source>
</reference>
<sequence length="196" mass="21350">MEELPATAIGLKVNDGIVLASERRLSYGGYVLSKQAKKVHKIGKFLMAGAGIYGDLQTLTRIMNVEIKYYEISTGKPISVHAAAKLLSVILYQYKVMPFISEILFGGVDEKGPQLYVLDPIGSLIEDNYAAVGSGARIAIGVLESEYDPNMNLDIAAQLITKAIKASIERDITSGDGIDLAIMDKKGNYENKFIPY</sequence>
<proteinExistence type="inferred from homology"/>